<feature type="chain" id="PRO_0000428933" description="Putative dehydratase IlvD1">
    <location>
        <begin position="1"/>
        <end position="574"/>
    </location>
</feature>
<feature type="binding site" evidence="2">
    <location>
        <position position="124"/>
    </location>
    <ligand>
        <name>[4Fe-4S] cluster</name>
        <dbReference type="ChEBI" id="CHEBI:49883"/>
    </ligand>
</feature>
<feature type="binding site" evidence="2">
    <location>
        <position position="197"/>
    </location>
    <ligand>
        <name>[4Fe-4S] cluster</name>
        <dbReference type="ChEBI" id="CHEBI:49883"/>
    </ligand>
</feature>
<accession>Q92RP0</accession>
<name>ILVD1_RHIME</name>
<proteinExistence type="inferred from homology"/>
<sequence>MSDKKKELRSRHWYGGTHKDGFIHRSWMKNQGFPDHVFDGRPIIGICNTWSELTPCNSHLRILAEGVKRGVWEAGGFPVEFPVSSLGETQMRPTAMLFRNLLAMDVEEAIRAYGIDGVVLLGGCDKTTPGQLMGAASVDLPTIVVSSGPMLNGKWKGKDIGSGTDVWKFSEAVRAGEMSLQEFMAAESGMSRSPGVCMTMGTATTMASIVEAMGLSLPTNAALPAVDARRMALSHMTGKRIVEMVHEDLRLSKILTKENFENGIIANAAVGGSTNAVVHMLAIAGRAGIDLCLEDFDRVGGQVPCIVNCMPSGKYLIEDLAYAGGLPAVMNRIQHLLHPDAPTVFGVPISKYWEAAEVYNDDVIRPLDNPLRAAAGIRVLKGNLAPNGAVIKPSAASEHLLAHEGPAYVFDTIEDLRAKIDDPDLPVTEDTILVLKGCGPKGYPGMAEVGNMPIPRRLVEKGVRDMVRISDARMSGTAFGTVVLHVSPEANAGGPLAIVRTGDRIRLDALKGELNLLVSEEELAARMAAWQPPEQKWHRGYYKLYHDTVLQADKGADLDFLVGKSGSEVLRESH</sequence>
<reference key="1">
    <citation type="journal article" date="2001" name="Proc. Natl. Acad. Sci. U.S.A.">
        <title>Analysis of the chromosome sequence of the legume symbiont Sinorhizobium meliloti strain 1021.</title>
        <authorList>
            <person name="Capela D."/>
            <person name="Barloy-Hubler F."/>
            <person name="Gouzy J."/>
            <person name="Bothe G."/>
            <person name="Ampe F."/>
            <person name="Batut J."/>
            <person name="Boistard P."/>
            <person name="Becker A."/>
            <person name="Boutry M."/>
            <person name="Cadieu E."/>
            <person name="Dreano S."/>
            <person name="Gloux S."/>
            <person name="Godrie T."/>
            <person name="Goffeau A."/>
            <person name="Kahn D."/>
            <person name="Kiss E."/>
            <person name="Lelaure V."/>
            <person name="Masuy D."/>
            <person name="Pohl T."/>
            <person name="Portetelle D."/>
            <person name="Puehler A."/>
            <person name="Purnelle B."/>
            <person name="Ramsperger U."/>
            <person name="Renard C."/>
            <person name="Thebault P."/>
            <person name="Vandenbol M."/>
            <person name="Weidner S."/>
            <person name="Galibert F."/>
        </authorList>
    </citation>
    <scope>NUCLEOTIDE SEQUENCE [LARGE SCALE GENOMIC DNA]</scope>
    <source>
        <strain>1021</strain>
    </source>
</reference>
<reference key="2">
    <citation type="journal article" date="2001" name="Science">
        <title>The composite genome of the legume symbiont Sinorhizobium meliloti.</title>
        <authorList>
            <person name="Galibert F."/>
            <person name="Finan T.M."/>
            <person name="Long S.R."/>
            <person name="Puehler A."/>
            <person name="Abola P."/>
            <person name="Ampe F."/>
            <person name="Barloy-Hubler F."/>
            <person name="Barnett M.J."/>
            <person name="Becker A."/>
            <person name="Boistard P."/>
            <person name="Bothe G."/>
            <person name="Boutry M."/>
            <person name="Bowser L."/>
            <person name="Buhrmester J."/>
            <person name="Cadieu E."/>
            <person name="Capela D."/>
            <person name="Chain P."/>
            <person name="Cowie A."/>
            <person name="Davis R.W."/>
            <person name="Dreano S."/>
            <person name="Federspiel N.A."/>
            <person name="Fisher R.F."/>
            <person name="Gloux S."/>
            <person name="Godrie T."/>
            <person name="Goffeau A."/>
            <person name="Golding B."/>
            <person name="Gouzy J."/>
            <person name="Gurjal M."/>
            <person name="Hernandez-Lucas I."/>
            <person name="Hong A."/>
            <person name="Huizar L."/>
            <person name="Hyman R.W."/>
            <person name="Jones T."/>
            <person name="Kahn D."/>
            <person name="Kahn M.L."/>
            <person name="Kalman S."/>
            <person name="Keating D.H."/>
            <person name="Kiss E."/>
            <person name="Komp C."/>
            <person name="Lelaure V."/>
            <person name="Masuy D."/>
            <person name="Palm C."/>
            <person name="Peck M.C."/>
            <person name="Pohl T.M."/>
            <person name="Portetelle D."/>
            <person name="Purnelle B."/>
            <person name="Ramsperger U."/>
            <person name="Surzycki R."/>
            <person name="Thebault P."/>
            <person name="Vandenbol M."/>
            <person name="Vorhoelter F.J."/>
            <person name="Weidner S."/>
            <person name="Wells D.H."/>
            <person name="Wong K."/>
            <person name="Yeh K.-C."/>
            <person name="Batut J."/>
        </authorList>
    </citation>
    <scope>NUCLEOTIDE SEQUENCE [LARGE SCALE GENOMIC DNA]</scope>
    <source>
        <strain>1021</strain>
    </source>
</reference>
<reference key="3">
    <citation type="journal article" date="2012" name="J. Bacteriol.">
        <title>Inability to catabolize galactose leads to increased ability to compete for nodule occupancy in Sinorhizobium meliloti.</title>
        <authorList>
            <person name="Geddes B.A."/>
            <person name="Oresnik I.J."/>
        </authorList>
    </citation>
    <scope>DISRUPTION PHENOTYPE</scope>
    <source>
        <strain>1021</strain>
    </source>
</reference>
<gene>
    <name type="primary">ilvD1</name>
    <name type="ordered locus">R00822</name>
    <name type="ORF">SMc00884</name>
</gene>
<comment type="function">
    <text evidence="4">Involved in the degradation of galactose via the DeLey-Doudoroff pathway.</text>
</comment>
<comment type="cofactor">
    <cofactor evidence="1">
        <name>[4Fe-4S] cluster</name>
        <dbReference type="ChEBI" id="CHEBI:49883"/>
    </cofactor>
    <text evidence="1">Binds 1 [4Fe-4S] cluster.</text>
</comment>
<comment type="disruption phenotype">
    <text evidence="3">Cells lacking this gene exhibit no detectable phenotype when grown on galactose as sole carbon source.</text>
</comment>
<comment type="similarity">
    <text evidence="4">Belongs to the IlvD/Edd family.</text>
</comment>
<dbReference type="EC" id="4.2.1.-"/>
<dbReference type="EMBL" id="AL591688">
    <property type="protein sequence ID" value="CAC45394.1"/>
    <property type="molecule type" value="Genomic_DNA"/>
</dbReference>
<dbReference type="RefSeq" id="NP_384928.1">
    <property type="nucleotide sequence ID" value="NC_003047.1"/>
</dbReference>
<dbReference type="RefSeq" id="WP_010968847.1">
    <property type="nucleotide sequence ID" value="NC_003047.1"/>
</dbReference>
<dbReference type="SMR" id="Q92RP0"/>
<dbReference type="EnsemblBacteria" id="CAC45394">
    <property type="protein sequence ID" value="CAC45394"/>
    <property type="gene ID" value="SMc00884"/>
</dbReference>
<dbReference type="KEGG" id="sme:SMc00884"/>
<dbReference type="PATRIC" id="fig|266834.11.peg.2212"/>
<dbReference type="eggNOG" id="COG0129">
    <property type="taxonomic scope" value="Bacteria"/>
</dbReference>
<dbReference type="HOGENOM" id="CLU_014271_3_1_5"/>
<dbReference type="OrthoDB" id="7793094at2"/>
<dbReference type="Proteomes" id="UP000001976">
    <property type="component" value="Chromosome"/>
</dbReference>
<dbReference type="GO" id="GO:0016836">
    <property type="term" value="F:hydro-lyase activity"/>
    <property type="evidence" value="ECO:0007669"/>
    <property type="project" value="UniProtKB-ARBA"/>
</dbReference>
<dbReference type="GO" id="GO:0051536">
    <property type="term" value="F:iron-sulfur cluster binding"/>
    <property type="evidence" value="ECO:0007669"/>
    <property type="project" value="UniProtKB-KW"/>
</dbReference>
<dbReference type="GO" id="GO:0046872">
    <property type="term" value="F:metal ion binding"/>
    <property type="evidence" value="ECO:0007669"/>
    <property type="project" value="UniProtKB-KW"/>
</dbReference>
<dbReference type="GO" id="GO:0019752">
    <property type="term" value="P:carboxylic acid metabolic process"/>
    <property type="evidence" value="ECO:0007669"/>
    <property type="project" value="UniProtKB-ARBA"/>
</dbReference>
<dbReference type="FunFam" id="3.50.30.80:FF:000001">
    <property type="entry name" value="Dihydroxy-acid dehydratase"/>
    <property type="match status" value="1"/>
</dbReference>
<dbReference type="Gene3D" id="3.50.30.80">
    <property type="entry name" value="IlvD/EDD C-terminal domain-like"/>
    <property type="match status" value="1"/>
</dbReference>
<dbReference type="InterPro" id="IPR042096">
    <property type="entry name" value="Dihydro-acid_dehy_C"/>
</dbReference>
<dbReference type="InterPro" id="IPR020558">
    <property type="entry name" value="DiOHA_6PGluconate_deHydtase_CS"/>
</dbReference>
<dbReference type="InterPro" id="IPR056740">
    <property type="entry name" value="ILV_EDD_C"/>
</dbReference>
<dbReference type="InterPro" id="IPR000581">
    <property type="entry name" value="ILV_EDD_N"/>
</dbReference>
<dbReference type="InterPro" id="IPR037237">
    <property type="entry name" value="IlvD/EDD_N"/>
</dbReference>
<dbReference type="InterPro" id="IPR052352">
    <property type="entry name" value="Sugar_Degrad_Dehydratases"/>
</dbReference>
<dbReference type="NCBIfam" id="NF004784">
    <property type="entry name" value="PRK06131.1"/>
    <property type="match status" value="1"/>
</dbReference>
<dbReference type="NCBIfam" id="NF009560">
    <property type="entry name" value="PRK13017.1"/>
    <property type="match status" value="1"/>
</dbReference>
<dbReference type="PANTHER" id="PTHR43183:SF1">
    <property type="entry name" value="HYPOTHETICAL DIHYDROXY-ACID DEHYDRATASE (EUROFUNG)-RELATED"/>
    <property type="match status" value="1"/>
</dbReference>
<dbReference type="PANTHER" id="PTHR43183">
    <property type="entry name" value="HYPOTHETICAL DIHYDROXYACID DEHYDRATASE (EUROFUNG)-RELATED"/>
    <property type="match status" value="1"/>
</dbReference>
<dbReference type="Pfam" id="PF24877">
    <property type="entry name" value="ILV_EDD_C"/>
    <property type="match status" value="1"/>
</dbReference>
<dbReference type="Pfam" id="PF00920">
    <property type="entry name" value="ILVD_EDD_N"/>
    <property type="match status" value="1"/>
</dbReference>
<dbReference type="SUPFAM" id="SSF143975">
    <property type="entry name" value="IlvD/EDD N-terminal domain-like"/>
    <property type="match status" value="1"/>
</dbReference>
<dbReference type="SUPFAM" id="SSF52016">
    <property type="entry name" value="LeuD/IlvD-like"/>
    <property type="match status" value="1"/>
</dbReference>
<dbReference type="PROSITE" id="PS00886">
    <property type="entry name" value="ILVD_EDD_1"/>
    <property type="match status" value="1"/>
</dbReference>
<organism>
    <name type="scientific">Rhizobium meliloti (strain 1021)</name>
    <name type="common">Ensifer meliloti</name>
    <name type="synonym">Sinorhizobium meliloti</name>
    <dbReference type="NCBI Taxonomy" id="266834"/>
    <lineage>
        <taxon>Bacteria</taxon>
        <taxon>Pseudomonadati</taxon>
        <taxon>Pseudomonadota</taxon>
        <taxon>Alphaproteobacteria</taxon>
        <taxon>Hyphomicrobiales</taxon>
        <taxon>Rhizobiaceae</taxon>
        <taxon>Sinorhizobium/Ensifer group</taxon>
        <taxon>Sinorhizobium</taxon>
    </lineage>
</organism>
<protein>
    <recommendedName>
        <fullName>Putative dehydratase IlvD1</fullName>
        <ecNumber>4.2.1.-</ecNumber>
    </recommendedName>
</protein>
<evidence type="ECO:0000250" key="1"/>
<evidence type="ECO:0000255" key="2"/>
<evidence type="ECO:0000269" key="3">
    <source>
    </source>
</evidence>
<evidence type="ECO:0000305" key="4"/>
<keyword id="KW-0408">Iron</keyword>
<keyword id="KW-0411">Iron-sulfur</keyword>
<keyword id="KW-0456">Lyase</keyword>
<keyword id="KW-0479">Metal-binding</keyword>
<keyword id="KW-1185">Reference proteome</keyword>